<keyword id="KW-1035">Host cytoplasm</keyword>
<keyword id="KW-1048">Host nucleus</keyword>
<keyword id="KW-0945">Host-virus interaction</keyword>
<keyword id="KW-0378">Hydrolase</keyword>
<keyword id="KW-1127">Modulation of host ubiquitin pathway by viral deubiquitinase</keyword>
<keyword id="KW-1130">Modulation of host ubiquitin pathway by virus</keyword>
<keyword id="KW-0645">Protease</keyword>
<keyword id="KW-0677">Repeat</keyword>
<keyword id="KW-0788">Thiol protease</keyword>
<keyword id="KW-0833">Ubl conjugation pathway</keyword>
<keyword id="KW-0946">Virion</keyword>
<keyword id="KW-0920">Virion tegument</keyword>
<proteinExistence type="inferred from homology"/>
<sequence length="2763" mass="306336">MDIIPPIAVTVAGVGSRNQFDGALGPASGLSCLRTSLSFLHMTYAHGINATLSSDMIDGCLQEGAAWTTDLSNMGRGVPDMCALVDLPNRISYIKLGDTTSTCCVLSRIYGDSHFFTVPDEGFMCTQIPARAFFDDVWMGREESYTIITVDSTGMAIYRQGNISFIFDPHGHGTIGQAVVVRVNTTDVYSYIASEYTHRPDNVESQWAAALVFFVTANDGPVSEEALSSAVTLIYGSCDTYFTDEQYCEKLVTAQHPLLLSPPNSTTIVLNKSSIVPLHQNVGESVSLEATLHSTLTNTVALDPRCSYSEVDPWHAVLETTSTGSGVLDCRRRRRPSWTPPSSEENLACIDDGLVNNTHSTDNLHKPAKKVLKFKPTVDVPDKTQVAHVLPRLREVANTPDVVLNVSNVDTPESSPTFSRNMNVGSSLKDRKPFLFEQSGDVNMVVEKLLQHGHEISNGYVQNAVGTLDTVITGHTNVPIWVTRPLVMPDEKDPLELFINLTILRLTGFVVENGTRTHHGATSVVSDFIGPLGEILTGFPSAAELIRVTSLILTNMPGAEYAIKTVLRKKCTIGMLIIAKFGLVAMRVQDTTGALHAELDVLEADLGGSSPIDLYSRLSTGLISILNSPIISHPGLFAELIPTRTGSLSERIRLLCELVSARETRYMREHTALVSSVKALENALRSTRNKIDAIQIPEVPQEPPEETDIPPEELIRRVYEIRSEVTMLLTSAVTEYFTRGVLYSTRALIAEQSPRRFRVATASTAPIQRLLDSLPEFDAKLTAIISSLSIHPPPETIQNLPVVSLLKELIKEGEDLNTDTALVSWLSVVGEAQTAGYLSRREFDELSRTIKTINTRATQRASAEAELSCFNTLSAAVDQAVKDYETYNNGEVKYPEITRDDLLATIVRATDDLVRQIKILSDPMIQSGLQPSIKRRLETRLKEVQTYANEARTTQDTIKSRKQAAYNKLGGLLRPVTGFVGLRAAVDLLPELASELDVQGALVNLRTKVLEAPVEIRSQLTGDFWALFNQYRDILEHPGNARTSVLGGLGACFTAIIEIVPIPTEYRPSLLAFFGDVADVLASDIATVSTNPESESAINAVVATLSKATLVSSTVPALSFVLSLYKKYQALQQEITNTHKLTELQKQLGDDFSTLAVSSGHLKFISSSNVDDYEINDAILSIQTNVHALMDTVKLVEVELQKLPPHCIAGTSTLSRVVKDLHKLVTMAHEKKEQAKVLITDCERAHKQQTTRVLYERWTRDIIACLEAMETRHVFNGTELARLRDMAAAGGFDIHAVYPQARQVVAACETTAVTALDTVFRHNPHTPENTNIPPPLALLRGLTWFDDFSITAPVFTVMFPGVSIEGLLLLMRIRAVVLLSADTSINGIPNYRDMILRTSGDLLQIPALAGYVDFYTRSYDQFITESVTLSELRADIRQAAGAKLTEANKALEEVTHVRAHETAKLALKEGVFITLPSEGLLIRAIEYFTTFDHKRFIGTAYERVLQTMVDRDLKEANAELAQFRMVCQATKNRAIQILQNIVDTANATEQQEDVDFTNLKTLLKLTPPPKTIALAIDRSTSVQDIVTQFALLLGRLEEETGTLDIQAVDWMYQARNIIDSHPLSVRIDGTGPLHTYKDRVDKLYALRTKLDLLRRRIETGEVTWDDAWTTFKRETGDMLASGDTYATSVDSIKALQASASVVDMLCSEPEFFLLPVETKNRLQKKQQERKTALDVVLQKQRQFEETASRLRALIERIPTESDHDVLRMLLHDFDQFTHLPIWIKTQYMTFRNLLMVRLGLYASYAEIFPPASPNGVFAPIPAMSGVCLEDQSRCIRARVAAFMGEASVVQTFREARSSIDALFGKNLTFYLDTDGVPLRYRVCYKSVGVKLGTMLCSQGGLSLRPALPDEGIVEETTLSALRVANEVNELRIEYESAIKSGFSAFSTFVRHRHAEWGKTNARRAIAEIYAGLITTTLTRQYGVHWDKLIYSFEKHHLTSVMGNGLTKPIQRRGDVRVLELTLSDIVTILVATTPVHLLNFARLDLIKQHEYMARTLRPVIEAAFRGRLLVRSLDGDPKGNARAFFNAAPSKHKLPLALGSNQDPTGGRIFAFRMADWKLVKMPQKITDPFAPWQLSPPPGVKANVDAVTRIMATDRLATITVLGRMCLPPISLVSMWNTLQPEEFAYRTQDDVDIIVDARLDLSSTLNARFDTAPSNTTLEWNTDRKVITDAYIQTGATTVFTVTGAAPTHVSNVTAFDIATTAILFGAPLVIAMELTSVFSQNSGLTLGLKLFDSRHMATDSGISSAVSPDIVSWGLRLLHMDPHPIENACLIVQLEKLSALIANKPLTNNPPCLLLLDEHMNPSYVLWERKDSIPAPDYVVFWGPESLIDLPYIDSDEDSFPSCPDDPFYSQIIAGYAPQGPPNLDTTDFYPTEPLFKSPVQVVRSSKCKKMPVQPVQPAQPVQPAQPAQPVQPAQPIEPGTQIVVQNFKKPQSVKTTLSQKDIPLYVETESETAVLIPKQLTTSIKTTVCKSITPPNNQLSDWKNNPQQNQTLNQAFNKPILEITSIPTDDSISYRTWIEKSNQTQKRHQNDPRMYNSKTVFHPVNNQLPSWVDTAADAPQTDLLTNYKTRQPSPNFPRDVHTWGVSSNPFNSPNRDLYESDFSEPSDGYSSESENSIVLSLDEHRSCRVPRHVRVVNADVVTGRRYVRGTALGALALLSQACRRMIDNVRYTRKLLMDHTEDIFQGLGYVKLLLDGTYI</sequence>
<dbReference type="EC" id="3.4.19.12" evidence="1"/>
<dbReference type="EC" id="3.4.22.-" evidence="1"/>
<dbReference type="EMBL" id="AB097932">
    <property type="status" value="NOT_ANNOTATED_CDS"/>
    <property type="molecule type" value="Genomic_DNA"/>
</dbReference>
<dbReference type="EMBL" id="AB097933">
    <property type="status" value="NOT_ANNOTATED_CDS"/>
    <property type="molecule type" value="Genomic_DNA"/>
</dbReference>
<dbReference type="EMBL" id="DQ008355">
    <property type="protein sequence ID" value="AAY57708.1"/>
    <property type="molecule type" value="Genomic_DNA"/>
</dbReference>
<dbReference type="EMBL" id="DQ008354">
    <property type="protein sequence ID" value="AAY57637.1"/>
    <property type="molecule type" value="Genomic_DNA"/>
</dbReference>
<dbReference type="SMR" id="Q4JQX9"/>
<dbReference type="IntAct" id="Q4JQX9">
    <property type="interactions" value="20"/>
</dbReference>
<dbReference type="MINT" id="Q4JQX9"/>
<dbReference type="Proteomes" id="UP000002603">
    <property type="component" value="Genome"/>
</dbReference>
<dbReference type="Proteomes" id="UP000008504">
    <property type="component" value="Genome"/>
</dbReference>
<dbReference type="Proteomes" id="UP000008505">
    <property type="component" value="Genome"/>
</dbReference>
<dbReference type="Proteomes" id="UP000008506">
    <property type="component" value="Genome"/>
</dbReference>
<dbReference type="GO" id="GO:0030430">
    <property type="term" value="C:host cell cytoplasm"/>
    <property type="evidence" value="ECO:0007669"/>
    <property type="project" value="UniProtKB-SubCell"/>
</dbReference>
<dbReference type="GO" id="GO:0042025">
    <property type="term" value="C:host cell nucleus"/>
    <property type="evidence" value="ECO:0007669"/>
    <property type="project" value="UniProtKB-SubCell"/>
</dbReference>
<dbReference type="GO" id="GO:0019033">
    <property type="term" value="C:viral tegument"/>
    <property type="evidence" value="ECO:0007669"/>
    <property type="project" value="UniProtKB-SubCell"/>
</dbReference>
<dbReference type="GO" id="GO:0004843">
    <property type="term" value="F:cysteine-type deubiquitinase activity"/>
    <property type="evidence" value="ECO:0007669"/>
    <property type="project" value="UniProtKB-EC"/>
</dbReference>
<dbReference type="GO" id="GO:0019784">
    <property type="term" value="F:deNEDDylase activity"/>
    <property type="evidence" value="ECO:0007669"/>
    <property type="project" value="InterPro"/>
</dbReference>
<dbReference type="GO" id="GO:0006508">
    <property type="term" value="P:proteolysis"/>
    <property type="evidence" value="ECO:0007669"/>
    <property type="project" value="UniProtKB-KW"/>
</dbReference>
<dbReference type="GO" id="GO:0039648">
    <property type="term" value="P:symbiont-mediated perturbation of host ubiquitin-like protein modification"/>
    <property type="evidence" value="ECO:0007669"/>
    <property type="project" value="UniProtKB-KW"/>
</dbReference>
<dbReference type="GO" id="GO:0039693">
    <property type="term" value="P:viral DNA genome replication"/>
    <property type="evidence" value="ECO:0007669"/>
    <property type="project" value="InterPro"/>
</dbReference>
<dbReference type="Gene3D" id="3.90.70.120">
    <property type="match status" value="1"/>
</dbReference>
<dbReference type="HAMAP" id="MF_04044">
    <property type="entry name" value="HSV_LTP"/>
    <property type="match status" value="1"/>
</dbReference>
<dbReference type="InterPro" id="IPR005210">
    <property type="entry name" value="Herpes_LT_deneddylase"/>
</dbReference>
<dbReference type="InterPro" id="IPR006928">
    <property type="entry name" value="Herpes_teg_USP"/>
</dbReference>
<dbReference type="InterPro" id="IPR034702">
    <property type="entry name" value="HSV_LTP"/>
</dbReference>
<dbReference type="InterPro" id="IPR038765">
    <property type="entry name" value="Papain-like_cys_pep_sf"/>
</dbReference>
<dbReference type="Pfam" id="PF04843">
    <property type="entry name" value="Herpes_teg_N"/>
    <property type="match status" value="1"/>
</dbReference>
<dbReference type="Pfam" id="PF03586">
    <property type="entry name" value="Herpes_UL36"/>
    <property type="match status" value="1"/>
</dbReference>
<dbReference type="SUPFAM" id="SSF54001">
    <property type="entry name" value="Cysteine proteinases"/>
    <property type="match status" value="1"/>
</dbReference>
<dbReference type="PROSITE" id="PS00116">
    <property type="entry name" value="DNA_POLYMERASE_B"/>
    <property type="match status" value="1"/>
</dbReference>
<dbReference type="PROSITE" id="PS51521">
    <property type="entry name" value="HTUSP"/>
    <property type="match status" value="1"/>
</dbReference>
<feature type="chain" id="PRO_0000385479" description="Large tegument protein deneddylase">
    <location>
        <begin position="1"/>
        <end position="2763"/>
    </location>
</feature>
<feature type="domain" description="Peptidase C76" evidence="1">
    <location>
        <begin position="12"/>
        <end position="237"/>
    </location>
</feature>
<feature type="repeat" description="1">
    <location>
        <begin position="2455"/>
        <end position="2457"/>
    </location>
</feature>
<feature type="repeat" description="2">
    <location>
        <begin position="2458"/>
        <end position="2460"/>
    </location>
</feature>
<feature type="repeat" description="3">
    <location>
        <begin position="2461"/>
        <end position="2463"/>
    </location>
</feature>
<feature type="repeat" description="4">
    <location>
        <begin position="2464"/>
        <end position="2466"/>
    </location>
</feature>
<feature type="repeat" description="5">
    <location>
        <begin position="2467"/>
        <end position="2469"/>
    </location>
</feature>
<feature type="repeat" description="6">
    <location>
        <begin position="2470"/>
        <end position="2472"/>
    </location>
</feature>
<feature type="repeat" description="7">
    <location>
        <begin position="2473"/>
        <end position="2475"/>
    </location>
</feature>
<feature type="repeat" description="8">
    <location>
        <begin position="2476"/>
        <end position="2478"/>
    </location>
</feature>
<feature type="region of interest" description="Deubiquitination activity" evidence="1">
    <location>
        <begin position="1"/>
        <end position="247"/>
    </location>
</feature>
<feature type="region of interest" description="Interaction with inner tegument protein" evidence="1">
    <location>
        <begin position="495"/>
        <end position="523"/>
    </location>
</feature>
<feature type="region of interest" description="8 X 3 AA repeats of P-A/V-Q">
    <location>
        <begin position="2455"/>
        <end position="2478"/>
    </location>
</feature>
<feature type="region of interest" description="Disordered" evidence="2">
    <location>
        <begin position="2630"/>
        <end position="2651"/>
    </location>
</feature>
<feature type="active site" evidence="1">
    <location>
        <position position="32"/>
    </location>
</feature>
<feature type="active site" evidence="1">
    <location>
        <position position="168"/>
    </location>
</feature>
<feature type="active site" evidence="1">
    <location>
        <position position="170"/>
    </location>
</feature>
<feature type="site" description="Important for catalytic activity" evidence="1">
    <location>
        <position position="19"/>
    </location>
</feature>
<feature type="sequence variant" description="In strain: Oka varicella vaccine VarilRix (V-Oka-GSK).">
    <original>A</original>
    <variation>V</variation>
    <location>
        <position position="2468"/>
    </location>
</feature>
<organism>
    <name type="scientific">Varicella-zoster virus (strain Oka vaccine)</name>
    <name type="common">HHV-3</name>
    <name type="synonym">Human herpesvirus 3</name>
    <dbReference type="NCBI Taxonomy" id="341980"/>
    <lineage>
        <taxon>Viruses</taxon>
        <taxon>Duplodnaviria</taxon>
        <taxon>Heunggongvirae</taxon>
        <taxon>Peploviricota</taxon>
        <taxon>Herviviricetes</taxon>
        <taxon>Herpesvirales</taxon>
        <taxon>Orthoherpesviridae</taxon>
        <taxon>Alphaherpesvirinae</taxon>
        <taxon>Varicellovirus</taxon>
        <taxon>Varicellovirus humanalpha3</taxon>
        <taxon>Human herpesvirus 3</taxon>
    </lineage>
</organism>
<name>LTP_VZVO</name>
<protein>
    <recommendedName>
        <fullName evidence="1">Large tegument protein deneddylase</fullName>
        <ecNumber evidence="1">3.4.19.12</ecNumber>
        <ecNumber evidence="1">3.4.22.-</ecNumber>
    </recommendedName>
</protein>
<accession>Q4JQX9</accession>
<accession>Q4JQV3</accession>
<evidence type="ECO:0000255" key="1">
    <source>
        <dbReference type="HAMAP-Rule" id="MF_04044"/>
    </source>
</evidence>
<evidence type="ECO:0000256" key="2">
    <source>
        <dbReference type="SAM" id="MobiDB-lite"/>
    </source>
</evidence>
<organismHost>
    <name type="scientific">Homo sapiens</name>
    <name type="common">Human</name>
    <dbReference type="NCBI Taxonomy" id="9606"/>
</organismHost>
<gene>
    <name type="ORF">ORF22</name>
</gene>
<reference key="1">
    <citation type="journal article" date="2002" name="J. Virol.">
        <title>Comparison of the complete DNA sequences of the Oka varicella vaccine and its parental virus.</title>
        <authorList>
            <person name="Gomi Y."/>
            <person name="Sunamachi H."/>
            <person name="Mori Y."/>
            <person name="Nagaike K."/>
            <person name="Takahashi M."/>
            <person name="Yamanishi K."/>
        </authorList>
    </citation>
    <scope>NUCLEOTIDE SEQUENCE [LARGE SCALE GENOMIC DNA]</scope>
    <source>
        <strain>Isolate Human/Japan/P-Oka/1970</strain>
        <strain>Oka varicella vaccine Biken (V-Oka-Biken)</strain>
    </source>
</reference>
<reference key="2">
    <citation type="journal article" date="2008" name="J. Virol.">
        <title>Complete DNA sequences of two oka strain varicella-zoster virus genomes.</title>
        <authorList>
            <person name="Tillieux S.L."/>
            <person name="Halsey W.S."/>
            <person name="Thomas E.S."/>
            <person name="Voycik J.J."/>
            <person name="Sathe G.M."/>
            <person name="Vassilev V."/>
        </authorList>
    </citation>
    <scope>NUCLEOTIDE SEQUENCE [LARGE SCALE GENOMIC DNA]</scope>
    <source>
        <strain>Oka varicella vaccine VarilRix (V-Oka-GSK)</strain>
        <strain>Oka varicella vaccine Varivax (V-Oka-Merck)</strain>
    </source>
</reference>
<comment type="function">
    <text evidence="1">Large tegument protein that plays multiple roles in the viral cycle. During viral entry, remains associated with the capsid while most of the tegument is detached and participates in the capsid transport toward the host nucleus. Plays a role in the routing of the capsid at the nuclear pore complex and subsequent uncoating. Within the host nucleus, acts as a deneddylase and promotes the degradation of nuclear CRLs (cullin-RING ubiquitin ligases) and thereby stabilizes nuclear CRL substrates, while cytoplasmic CRLs remain unaffected. These modifications prevent host cell cycle S-phase progression and create a favorable environment allowing efficient viral genome replication. Participates later in the secondary envelopment of capsids. Indeed, plays a linker role for the association of the outer viral tegument to the capsids together with the inner tegument protein.</text>
</comment>
<comment type="catalytic activity">
    <reaction evidence="1">
        <text>Thiol-dependent hydrolysis of ester, thioester, amide, peptide and isopeptide bonds formed by the C-terminal Gly of ubiquitin (a 76-residue protein attached to proteins as an intracellular targeting signal).</text>
        <dbReference type="EC" id="3.4.19.12"/>
    </reaction>
</comment>
<comment type="subunit">
    <text evidence="1">Interacts with host CUL1 and CUL4A; these interactions inhibit the E3 ligase activity of cullins. Interacts with inner tegument protein. Interacts with capsid vertex specific component CVC2. Interacts with the major capsid protein/MCP.</text>
</comment>
<comment type="subcellular location">
    <subcellularLocation>
        <location evidence="1">Virion tegument</location>
    </subcellularLocation>
    <subcellularLocation>
        <location evidence="1">Host cytoplasm</location>
    </subcellularLocation>
    <subcellularLocation>
        <location evidence="1">Host nucleus</location>
    </subcellularLocation>
    <text evidence="1">Tightly associated with the capsid.</text>
</comment>
<comment type="similarity">
    <text evidence="1">Belongs to the herpesviridae large tegument protein family.</text>
</comment>